<feature type="chain" id="PRO_1000119164" description="S-adenosylmethionine:tRNA ribosyltransferase-isomerase">
    <location>
        <begin position="1"/>
        <end position="364"/>
    </location>
</feature>
<feature type="region of interest" description="Disordered" evidence="2">
    <location>
        <begin position="344"/>
        <end position="364"/>
    </location>
</feature>
<organism>
    <name type="scientific">Thioalkalivibrio sulfidiphilus (strain HL-EbGR7)</name>
    <dbReference type="NCBI Taxonomy" id="396588"/>
    <lineage>
        <taxon>Bacteria</taxon>
        <taxon>Pseudomonadati</taxon>
        <taxon>Pseudomonadota</taxon>
        <taxon>Gammaproteobacteria</taxon>
        <taxon>Chromatiales</taxon>
        <taxon>Ectothiorhodospiraceae</taxon>
        <taxon>Thioalkalivibrio</taxon>
    </lineage>
</organism>
<evidence type="ECO:0000255" key="1">
    <source>
        <dbReference type="HAMAP-Rule" id="MF_00113"/>
    </source>
</evidence>
<evidence type="ECO:0000256" key="2">
    <source>
        <dbReference type="SAM" id="MobiDB-lite"/>
    </source>
</evidence>
<accession>B8GTQ5</accession>
<dbReference type="EC" id="2.4.99.17" evidence="1"/>
<dbReference type="EMBL" id="CP001339">
    <property type="protein sequence ID" value="ACL73149.1"/>
    <property type="molecule type" value="Genomic_DNA"/>
</dbReference>
<dbReference type="RefSeq" id="WP_012638628.1">
    <property type="nucleotide sequence ID" value="NC_011901.1"/>
</dbReference>
<dbReference type="SMR" id="B8GTQ5"/>
<dbReference type="STRING" id="396588.Tgr7_2069"/>
<dbReference type="KEGG" id="tgr:Tgr7_2069"/>
<dbReference type="eggNOG" id="COG0809">
    <property type="taxonomic scope" value="Bacteria"/>
</dbReference>
<dbReference type="HOGENOM" id="CLU_039110_1_0_6"/>
<dbReference type="OrthoDB" id="9805933at2"/>
<dbReference type="UniPathway" id="UPA00392"/>
<dbReference type="Proteomes" id="UP000002383">
    <property type="component" value="Chromosome"/>
</dbReference>
<dbReference type="GO" id="GO:0005737">
    <property type="term" value="C:cytoplasm"/>
    <property type="evidence" value="ECO:0007669"/>
    <property type="project" value="UniProtKB-SubCell"/>
</dbReference>
<dbReference type="GO" id="GO:0051075">
    <property type="term" value="F:S-adenosylmethionine:tRNA ribosyltransferase-isomerase activity"/>
    <property type="evidence" value="ECO:0007669"/>
    <property type="project" value="UniProtKB-EC"/>
</dbReference>
<dbReference type="GO" id="GO:0008616">
    <property type="term" value="P:queuosine biosynthetic process"/>
    <property type="evidence" value="ECO:0007669"/>
    <property type="project" value="UniProtKB-UniRule"/>
</dbReference>
<dbReference type="GO" id="GO:0002099">
    <property type="term" value="P:tRNA wobble guanine modification"/>
    <property type="evidence" value="ECO:0007669"/>
    <property type="project" value="TreeGrafter"/>
</dbReference>
<dbReference type="FunFam" id="3.40.1780.10:FF:000001">
    <property type="entry name" value="S-adenosylmethionine:tRNA ribosyltransferase-isomerase"/>
    <property type="match status" value="1"/>
</dbReference>
<dbReference type="Gene3D" id="2.40.10.240">
    <property type="entry name" value="QueA-like"/>
    <property type="match status" value="1"/>
</dbReference>
<dbReference type="Gene3D" id="3.40.1780.10">
    <property type="entry name" value="QueA-like"/>
    <property type="match status" value="1"/>
</dbReference>
<dbReference type="HAMAP" id="MF_00113">
    <property type="entry name" value="QueA"/>
    <property type="match status" value="1"/>
</dbReference>
<dbReference type="InterPro" id="IPR003699">
    <property type="entry name" value="QueA"/>
</dbReference>
<dbReference type="InterPro" id="IPR042118">
    <property type="entry name" value="QueA_dom1"/>
</dbReference>
<dbReference type="InterPro" id="IPR042119">
    <property type="entry name" value="QueA_dom2"/>
</dbReference>
<dbReference type="InterPro" id="IPR036100">
    <property type="entry name" value="QueA_sf"/>
</dbReference>
<dbReference type="NCBIfam" id="NF001140">
    <property type="entry name" value="PRK00147.1"/>
    <property type="match status" value="1"/>
</dbReference>
<dbReference type="NCBIfam" id="TIGR00113">
    <property type="entry name" value="queA"/>
    <property type="match status" value="1"/>
</dbReference>
<dbReference type="PANTHER" id="PTHR30307">
    <property type="entry name" value="S-ADENOSYLMETHIONINE:TRNA RIBOSYLTRANSFERASE-ISOMERASE"/>
    <property type="match status" value="1"/>
</dbReference>
<dbReference type="PANTHER" id="PTHR30307:SF0">
    <property type="entry name" value="S-ADENOSYLMETHIONINE:TRNA RIBOSYLTRANSFERASE-ISOMERASE"/>
    <property type="match status" value="1"/>
</dbReference>
<dbReference type="Pfam" id="PF02547">
    <property type="entry name" value="Queuosine_synth"/>
    <property type="match status" value="1"/>
</dbReference>
<dbReference type="SUPFAM" id="SSF111337">
    <property type="entry name" value="QueA-like"/>
    <property type="match status" value="1"/>
</dbReference>
<comment type="function">
    <text evidence="1">Transfers and isomerizes the ribose moiety from AdoMet to the 7-aminomethyl group of 7-deazaguanine (preQ1-tRNA) to give epoxyqueuosine (oQ-tRNA).</text>
</comment>
<comment type="catalytic activity">
    <reaction evidence="1">
        <text>7-aminomethyl-7-carbaguanosine(34) in tRNA + S-adenosyl-L-methionine = epoxyqueuosine(34) in tRNA + adenine + L-methionine + 2 H(+)</text>
        <dbReference type="Rhea" id="RHEA:32155"/>
        <dbReference type="Rhea" id="RHEA-COMP:10342"/>
        <dbReference type="Rhea" id="RHEA-COMP:18582"/>
        <dbReference type="ChEBI" id="CHEBI:15378"/>
        <dbReference type="ChEBI" id="CHEBI:16708"/>
        <dbReference type="ChEBI" id="CHEBI:57844"/>
        <dbReference type="ChEBI" id="CHEBI:59789"/>
        <dbReference type="ChEBI" id="CHEBI:82833"/>
        <dbReference type="ChEBI" id="CHEBI:194443"/>
        <dbReference type="EC" id="2.4.99.17"/>
    </reaction>
</comment>
<comment type="pathway">
    <text evidence="1">tRNA modification; tRNA-queuosine biosynthesis.</text>
</comment>
<comment type="subunit">
    <text evidence="1">Monomer.</text>
</comment>
<comment type="subcellular location">
    <subcellularLocation>
        <location evidence="1">Cytoplasm</location>
    </subcellularLocation>
</comment>
<comment type="similarity">
    <text evidence="1">Belongs to the QueA family.</text>
</comment>
<sequence length="364" mass="40428">MRLSDFHYELPPELIAQRPLAERSASRLLCLDRDTGALADRRFRDLPDLLNPGDLLVFNDTRVIPARLLGVKRDTGGRVEVLVERVLDEHRVLAHVRASKSPGEGVVLWLEEALEAVVEGREGDLFCLWFAGDLPVIELLERHGHMPLPPYIERPDAAEDRDRYQTVFASRPGAVAAPTAGLHFDADIMARMRARGVETAAVTLHVGAGTFQPVRVEDVSRHVMHAEWTEVSTQVCDQVAACRARGGRVVAVGTTAVRSLESAAADGELKPFSGDTRLFITPGYTFRVVDALVTNFHLPESTLLMLVSAFAGYEPVMQAYRHAVAERYRFFSYGDAMFIGPQEASDKMQETSGRGERPRFDHEI</sequence>
<gene>
    <name evidence="1" type="primary">queA</name>
    <name type="ordered locus">Tgr7_2069</name>
</gene>
<reference key="1">
    <citation type="journal article" date="2011" name="Stand. Genomic Sci.">
        <title>Complete genome sequence of 'Thioalkalivibrio sulfidophilus' HL-EbGr7.</title>
        <authorList>
            <person name="Muyzer G."/>
            <person name="Sorokin D.Y."/>
            <person name="Mavromatis K."/>
            <person name="Lapidus A."/>
            <person name="Clum A."/>
            <person name="Ivanova N."/>
            <person name="Pati A."/>
            <person name="d'Haeseleer P."/>
            <person name="Woyke T."/>
            <person name="Kyrpides N.C."/>
        </authorList>
    </citation>
    <scope>NUCLEOTIDE SEQUENCE [LARGE SCALE GENOMIC DNA]</scope>
    <source>
        <strain>HL-EbGR7</strain>
    </source>
</reference>
<keyword id="KW-0963">Cytoplasm</keyword>
<keyword id="KW-0671">Queuosine biosynthesis</keyword>
<keyword id="KW-1185">Reference proteome</keyword>
<keyword id="KW-0949">S-adenosyl-L-methionine</keyword>
<keyword id="KW-0808">Transferase</keyword>
<name>QUEA_THISH</name>
<proteinExistence type="inferred from homology"/>
<protein>
    <recommendedName>
        <fullName evidence="1">S-adenosylmethionine:tRNA ribosyltransferase-isomerase</fullName>
        <ecNumber evidence="1">2.4.99.17</ecNumber>
    </recommendedName>
    <alternativeName>
        <fullName evidence="1">Queuosine biosynthesis protein QueA</fullName>
    </alternativeName>
</protein>